<evidence type="ECO:0000255" key="1">
    <source>
        <dbReference type="HAMAP-Rule" id="MF_01225"/>
    </source>
</evidence>
<evidence type="ECO:0000255" key="2">
    <source>
        <dbReference type="PROSITE-ProRule" id="PRU01266"/>
    </source>
</evidence>
<sequence length="334" mass="36715">MTAPMQDRYGRPLRDLRLSVIEACNFRCGYCMPADRVPDDYGFDSQQRLSFDQLETLVRAFVSVGVTKVRLTGGEPLLRRDLPSLIARLTAIEGIEDLALTTNGTLLARQAVALRQAGLRRITVSMDALEPALFRRMSGDRGEIAQVLTGIAAAEQAGFQRLKINCVVQRGVNEDQVLPLVEHFRGTGHVLRFIEFMDVGSCNGWTPDAVVTSAQLHERIHARWPLVALDANYTGEVAQRHAFADGAGEVGFVSSVSVPFCGDCQRARVSADGHLYTCLFASQGHDLKPALANGEPALATHLRQRWSVRGDRYSEVRASVPRRGKPVEMFLIGG</sequence>
<comment type="function">
    <text evidence="1">Catalyzes the cyclization of GTP to (8S)-3',8-cyclo-7,8-dihydroguanosine 5'-triphosphate.</text>
</comment>
<comment type="catalytic activity">
    <reaction evidence="1">
        <text>GTP + AH2 + S-adenosyl-L-methionine = (8S)-3',8-cyclo-7,8-dihydroguanosine 5'-triphosphate + 5'-deoxyadenosine + L-methionine + A + H(+)</text>
        <dbReference type="Rhea" id="RHEA:49576"/>
        <dbReference type="ChEBI" id="CHEBI:13193"/>
        <dbReference type="ChEBI" id="CHEBI:15378"/>
        <dbReference type="ChEBI" id="CHEBI:17319"/>
        <dbReference type="ChEBI" id="CHEBI:17499"/>
        <dbReference type="ChEBI" id="CHEBI:37565"/>
        <dbReference type="ChEBI" id="CHEBI:57844"/>
        <dbReference type="ChEBI" id="CHEBI:59789"/>
        <dbReference type="ChEBI" id="CHEBI:131766"/>
        <dbReference type="EC" id="4.1.99.22"/>
    </reaction>
</comment>
<comment type="cofactor">
    <cofactor evidence="1">
        <name>[4Fe-4S] cluster</name>
        <dbReference type="ChEBI" id="CHEBI:49883"/>
    </cofactor>
    <text evidence="1">Binds 2 [4Fe-4S] clusters. Binds 1 [4Fe-4S] cluster coordinated with 3 cysteines and an exchangeable S-adenosyl-L-methionine and 1 [4Fe-4S] cluster coordinated with 3 cysteines and the GTP-derived substrate.</text>
</comment>
<comment type="pathway">
    <text evidence="1">Cofactor biosynthesis; molybdopterin biosynthesis.</text>
</comment>
<comment type="subunit">
    <text evidence="1">Monomer and homodimer.</text>
</comment>
<comment type="similarity">
    <text evidence="1">Belongs to the radical SAM superfamily. MoaA family.</text>
</comment>
<name>MOAA_XANAC</name>
<reference key="1">
    <citation type="journal article" date="2002" name="Nature">
        <title>Comparison of the genomes of two Xanthomonas pathogens with differing host specificities.</title>
        <authorList>
            <person name="da Silva A.C.R."/>
            <person name="Ferro J.A."/>
            <person name="Reinach F.C."/>
            <person name="Farah C.S."/>
            <person name="Furlan L.R."/>
            <person name="Quaggio R.B."/>
            <person name="Monteiro-Vitorello C.B."/>
            <person name="Van Sluys M.A."/>
            <person name="Almeida N.F. Jr."/>
            <person name="Alves L.M.C."/>
            <person name="do Amaral A.M."/>
            <person name="Bertolini M.C."/>
            <person name="Camargo L.E.A."/>
            <person name="Camarotte G."/>
            <person name="Cannavan F."/>
            <person name="Cardozo J."/>
            <person name="Chambergo F."/>
            <person name="Ciapina L.P."/>
            <person name="Cicarelli R.M.B."/>
            <person name="Coutinho L.L."/>
            <person name="Cursino-Santos J.R."/>
            <person name="El-Dorry H."/>
            <person name="Faria J.B."/>
            <person name="Ferreira A.J.S."/>
            <person name="Ferreira R.C.C."/>
            <person name="Ferro M.I.T."/>
            <person name="Formighieri E.F."/>
            <person name="Franco M.C."/>
            <person name="Greggio C.C."/>
            <person name="Gruber A."/>
            <person name="Katsuyama A.M."/>
            <person name="Kishi L.T."/>
            <person name="Leite R.P."/>
            <person name="Lemos E.G.M."/>
            <person name="Lemos M.V.F."/>
            <person name="Locali E.C."/>
            <person name="Machado M.A."/>
            <person name="Madeira A.M.B.N."/>
            <person name="Martinez-Rossi N.M."/>
            <person name="Martins E.C."/>
            <person name="Meidanis J."/>
            <person name="Menck C.F.M."/>
            <person name="Miyaki C.Y."/>
            <person name="Moon D.H."/>
            <person name="Moreira L.M."/>
            <person name="Novo M.T.M."/>
            <person name="Okura V.K."/>
            <person name="Oliveira M.C."/>
            <person name="Oliveira V.R."/>
            <person name="Pereira H.A."/>
            <person name="Rossi A."/>
            <person name="Sena J.A.D."/>
            <person name="Silva C."/>
            <person name="de Souza R.F."/>
            <person name="Spinola L.A.F."/>
            <person name="Takita M.A."/>
            <person name="Tamura R.E."/>
            <person name="Teixeira E.C."/>
            <person name="Tezza R.I.D."/>
            <person name="Trindade dos Santos M."/>
            <person name="Truffi D."/>
            <person name="Tsai S.M."/>
            <person name="White F.F."/>
            <person name="Setubal J.C."/>
            <person name="Kitajima J.P."/>
        </authorList>
    </citation>
    <scope>NUCLEOTIDE SEQUENCE [LARGE SCALE GENOMIC DNA]</scope>
    <source>
        <strain>306</strain>
    </source>
</reference>
<feature type="chain" id="PRO_0000153010" description="GTP 3',8-cyclase">
    <location>
        <begin position="1"/>
        <end position="334"/>
    </location>
</feature>
<feature type="domain" description="Radical SAM core" evidence="2">
    <location>
        <begin position="8"/>
        <end position="244"/>
    </location>
</feature>
<feature type="binding site" evidence="1">
    <location>
        <position position="17"/>
    </location>
    <ligand>
        <name>GTP</name>
        <dbReference type="ChEBI" id="CHEBI:37565"/>
    </ligand>
</feature>
<feature type="binding site" evidence="1">
    <location>
        <position position="24"/>
    </location>
    <ligand>
        <name>[4Fe-4S] cluster</name>
        <dbReference type="ChEBI" id="CHEBI:49883"/>
        <label>1</label>
        <note>4Fe-4S-S-AdoMet</note>
    </ligand>
</feature>
<feature type="binding site" evidence="1">
    <location>
        <position position="28"/>
    </location>
    <ligand>
        <name>[4Fe-4S] cluster</name>
        <dbReference type="ChEBI" id="CHEBI:49883"/>
        <label>1</label>
        <note>4Fe-4S-S-AdoMet</note>
    </ligand>
</feature>
<feature type="binding site" evidence="1">
    <location>
        <position position="30"/>
    </location>
    <ligand>
        <name>S-adenosyl-L-methionine</name>
        <dbReference type="ChEBI" id="CHEBI:59789"/>
    </ligand>
</feature>
<feature type="binding site" evidence="1">
    <location>
        <position position="31"/>
    </location>
    <ligand>
        <name>[4Fe-4S] cluster</name>
        <dbReference type="ChEBI" id="CHEBI:49883"/>
        <label>1</label>
        <note>4Fe-4S-S-AdoMet</note>
    </ligand>
</feature>
<feature type="binding site" evidence="1">
    <location>
        <position position="70"/>
    </location>
    <ligand>
        <name>GTP</name>
        <dbReference type="ChEBI" id="CHEBI:37565"/>
    </ligand>
</feature>
<feature type="binding site" evidence="1">
    <location>
        <position position="74"/>
    </location>
    <ligand>
        <name>S-adenosyl-L-methionine</name>
        <dbReference type="ChEBI" id="CHEBI:59789"/>
    </ligand>
</feature>
<feature type="binding site" evidence="1">
    <location>
        <position position="101"/>
    </location>
    <ligand>
        <name>GTP</name>
        <dbReference type="ChEBI" id="CHEBI:37565"/>
    </ligand>
</feature>
<feature type="binding site" evidence="1">
    <location>
        <position position="125"/>
    </location>
    <ligand>
        <name>S-adenosyl-L-methionine</name>
        <dbReference type="ChEBI" id="CHEBI:59789"/>
    </ligand>
</feature>
<feature type="binding site" evidence="1">
    <location>
        <position position="163"/>
    </location>
    <ligand>
        <name>GTP</name>
        <dbReference type="ChEBI" id="CHEBI:37565"/>
    </ligand>
</feature>
<feature type="binding site" evidence="1">
    <location>
        <position position="197"/>
    </location>
    <ligand>
        <name>S-adenosyl-L-methionine</name>
        <dbReference type="ChEBI" id="CHEBI:59789"/>
    </ligand>
</feature>
<feature type="binding site" evidence="1">
    <location>
        <position position="261"/>
    </location>
    <ligand>
        <name>[4Fe-4S] cluster</name>
        <dbReference type="ChEBI" id="CHEBI:49883"/>
        <label>2</label>
        <note>4Fe-4S-substrate</note>
    </ligand>
</feature>
<feature type="binding site" evidence="1">
    <location>
        <position position="264"/>
    </location>
    <ligand>
        <name>[4Fe-4S] cluster</name>
        <dbReference type="ChEBI" id="CHEBI:49883"/>
        <label>2</label>
        <note>4Fe-4S-substrate</note>
    </ligand>
</feature>
<feature type="binding site" evidence="1">
    <location>
        <begin position="266"/>
        <end position="268"/>
    </location>
    <ligand>
        <name>GTP</name>
        <dbReference type="ChEBI" id="CHEBI:37565"/>
    </ligand>
</feature>
<feature type="binding site" evidence="1">
    <location>
        <position position="278"/>
    </location>
    <ligand>
        <name>[4Fe-4S] cluster</name>
        <dbReference type="ChEBI" id="CHEBI:49883"/>
        <label>2</label>
        <note>4Fe-4S-substrate</note>
    </ligand>
</feature>
<proteinExistence type="inferred from homology"/>
<dbReference type="EC" id="4.1.99.22" evidence="1"/>
<dbReference type="EMBL" id="AE008923">
    <property type="protein sequence ID" value="AAM35971.1"/>
    <property type="molecule type" value="Genomic_DNA"/>
</dbReference>
<dbReference type="SMR" id="Q8PNH1"/>
<dbReference type="KEGG" id="xac:XAC1097"/>
<dbReference type="eggNOG" id="COG2896">
    <property type="taxonomic scope" value="Bacteria"/>
</dbReference>
<dbReference type="HOGENOM" id="CLU_009273_0_1_6"/>
<dbReference type="UniPathway" id="UPA00344"/>
<dbReference type="Proteomes" id="UP000000576">
    <property type="component" value="Chromosome"/>
</dbReference>
<dbReference type="GO" id="GO:0051539">
    <property type="term" value="F:4 iron, 4 sulfur cluster binding"/>
    <property type="evidence" value="ECO:0007669"/>
    <property type="project" value="UniProtKB-UniRule"/>
</dbReference>
<dbReference type="GO" id="GO:0061799">
    <property type="term" value="F:cyclic pyranopterin monophosphate synthase activity"/>
    <property type="evidence" value="ECO:0007669"/>
    <property type="project" value="TreeGrafter"/>
</dbReference>
<dbReference type="GO" id="GO:0061798">
    <property type="term" value="F:GTP 3',8'-cyclase activity"/>
    <property type="evidence" value="ECO:0007669"/>
    <property type="project" value="UniProtKB-UniRule"/>
</dbReference>
<dbReference type="GO" id="GO:0005525">
    <property type="term" value="F:GTP binding"/>
    <property type="evidence" value="ECO:0007669"/>
    <property type="project" value="UniProtKB-UniRule"/>
</dbReference>
<dbReference type="GO" id="GO:0046872">
    <property type="term" value="F:metal ion binding"/>
    <property type="evidence" value="ECO:0007669"/>
    <property type="project" value="UniProtKB-KW"/>
</dbReference>
<dbReference type="GO" id="GO:1904047">
    <property type="term" value="F:S-adenosyl-L-methionine binding"/>
    <property type="evidence" value="ECO:0007669"/>
    <property type="project" value="UniProtKB-UniRule"/>
</dbReference>
<dbReference type="GO" id="GO:0006777">
    <property type="term" value="P:Mo-molybdopterin cofactor biosynthetic process"/>
    <property type="evidence" value="ECO:0007669"/>
    <property type="project" value="UniProtKB-UniRule"/>
</dbReference>
<dbReference type="CDD" id="cd01335">
    <property type="entry name" value="Radical_SAM"/>
    <property type="match status" value="1"/>
</dbReference>
<dbReference type="CDD" id="cd21117">
    <property type="entry name" value="Twitch_MoaA"/>
    <property type="match status" value="1"/>
</dbReference>
<dbReference type="Gene3D" id="3.20.20.70">
    <property type="entry name" value="Aldolase class I"/>
    <property type="match status" value="1"/>
</dbReference>
<dbReference type="HAMAP" id="MF_01225_B">
    <property type="entry name" value="MoaA_B"/>
    <property type="match status" value="1"/>
</dbReference>
<dbReference type="InterPro" id="IPR013785">
    <property type="entry name" value="Aldolase_TIM"/>
</dbReference>
<dbReference type="InterPro" id="IPR006638">
    <property type="entry name" value="Elp3/MiaA/NifB-like_rSAM"/>
</dbReference>
<dbReference type="InterPro" id="IPR013483">
    <property type="entry name" value="MoaA"/>
</dbReference>
<dbReference type="InterPro" id="IPR000385">
    <property type="entry name" value="MoaA_NifB_PqqE_Fe-S-bd_CS"/>
</dbReference>
<dbReference type="InterPro" id="IPR010505">
    <property type="entry name" value="MoaA_twitch"/>
</dbReference>
<dbReference type="InterPro" id="IPR050105">
    <property type="entry name" value="MoCo_biosynth_MoaA/MoaC"/>
</dbReference>
<dbReference type="InterPro" id="IPR007197">
    <property type="entry name" value="rSAM"/>
</dbReference>
<dbReference type="NCBIfam" id="TIGR02666">
    <property type="entry name" value="moaA"/>
    <property type="match status" value="1"/>
</dbReference>
<dbReference type="PANTHER" id="PTHR22960:SF0">
    <property type="entry name" value="MOLYBDENUM COFACTOR BIOSYNTHESIS PROTEIN 1"/>
    <property type="match status" value="1"/>
</dbReference>
<dbReference type="PANTHER" id="PTHR22960">
    <property type="entry name" value="MOLYBDOPTERIN COFACTOR SYNTHESIS PROTEIN A"/>
    <property type="match status" value="1"/>
</dbReference>
<dbReference type="Pfam" id="PF13353">
    <property type="entry name" value="Fer4_12"/>
    <property type="match status" value="1"/>
</dbReference>
<dbReference type="Pfam" id="PF06463">
    <property type="entry name" value="Mob_synth_C"/>
    <property type="match status" value="1"/>
</dbReference>
<dbReference type="Pfam" id="PF04055">
    <property type="entry name" value="Radical_SAM"/>
    <property type="match status" value="1"/>
</dbReference>
<dbReference type="SFLD" id="SFLDG01383">
    <property type="entry name" value="cyclic_pyranopterin_phosphate"/>
    <property type="match status" value="1"/>
</dbReference>
<dbReference type="SFLD" id="SFLDG01216">
    <property type="entry name" value="thioether_bond_formation_requi"/>
    <property type="match status" value="1"/>
</dbReference>
<dbReference type="SMART" id="SM00729">
    <property type="entry name" value="Elp3"/>
    <property type="match status" value="1"/>
</dbReference>
<dbReference type="SUPFAM" id="SSF102114">
    <property type="entry name" value="Radical SAM enzymes"/>
    <property type="match status" value="1"/>
</dbReference>
<dbReference type="PROSITE" id="PS01305">
    <property type="entry name" value="MOAA_NIFB_PQQE"/>
    <property type="match status" value="1"/>
</dbReference>
<dbReference type="PROSITE" id="PS51918">
    <property type="entry name" value="RADICAL_SAM"/>
    <property type="match status" value="1"/>
</dbReference>
<organism>
    <name type="scientific">Xanthomonas axonopodis pv. citri (strain 306)</name>
    <dbReference type="NCBI Taxonomy" id="190486"/>
    <lineage>
        <taxon>Bacteria</taxon>
        <taxon>Pseudomonadati</taxon>
        <taxon>Pseudomonadota</taxon>
        <taxon>Gammaproteobacteria</taxon>
        <taxon>Lysobacterales</taxon>
        <taxon>Lysobacteraceae</taxon>
        <taxon>Xanthomonas</taxon>
    </lineage>
</organism>
<keyword id="KW-0004">4Fe-4S</keyword>
<keyword id="KW-0342">GTP-binding</keyword>
<keyword id="KW-0408">Iron</keyword>
<keyword id="KW-0411">Iron-sulfur</keyword>
<keyword id="KW-0456">Lyase</keyword>
<keyword id="KW-0479">Metal-binding</keyword>
<keyword id="KW-0501">Molybdenum cofactor biosynthesis</keyword>
<keyword id="KW-0547">Nucleotide-binding</keyword>
<keyword id="KW-0949">S-adenosyl-L-methionine</keyword>
<protein>
    <recommendedName>
        <fullName evidence="1">GTP 3',8-cyclase</fullName>
        <ecNumber evidence="1">4.1.99.22</ecNumber>
    </recommendedName>
    <alternativeName>
        <fullName evidence="1">Molybdenum cofactor biosynthesis protein A</fullName>
    </alternativeName>
</protein>
<gene>
    <name evidence="1" type="primary">moaA</name>
    <name type="ordered locus">XAC1097</name>
</gene>
<accession>Q8PNH1</accession>